<reference key="1">
    <citation type="journal article" date="2009" name="BMC Genomics">
        <title>Metabolic analysis of the soil microbe Dechloromonas aromatica str. RCB: indications of a surprisingly complex life-style and cryptic anaerobic pathways for aromatic degradation.</title>
        <authorList>
            <person name="Salinero K.K."/>
            <person name="Keller K."/>
            <person name="Feil W.S."/>
            <person name="Feil H."/>
            <person name="Trong S."/>
            <person name="Di Bartolo G."/>
            <person name="Lapidus A."/>
        </authorList>
    </citation>
    <scope>NUCLEOTIDE SEQUENCE [LARGE SCALE GENOMIC DNA]</scope>
    <source>
        <strain>RCB</strain>
    </source>
</reference>
<keyword id="KW-0067">ATP-binding</keyword>
<keyword id="KW-0436">Ligase</keyword>
<keyword id="KW-0547">Nucleotide-binding</keyword>
<organism>
    <name type="scientific">Dechloromonas aromatica (strain RCB)</name>
    <dbReference type="NCBI Taxonomy" id="159087"/>
    <lineage>
        <taxon>Bacteria</taxon>
        <taxon>Pseudomonadati</taxon>
        <taxon>Pseudomonadota</taxon>
        <taxon>Betaproteobacteria</taxon>
        <taxon>Rhodocyclales</taxon>
        <taxon>Azonexaceae</taxon>
        <taxon>Dechloromonas</taxon>
    </lineage>
</organism>
<dbReference type="EC" id="6.3.2.2" evidence="1"/>
<dbReference type="EMBL" id="CP000089">
    <property type="protein sequence ID" value="AAZ46857.1"/>
    <property type="molecule type" value="Genomic_DNA"/>
</dbReference>
<dbReference type="SMR" id="Q47E74"/>
<dbReference type="STRING" id="159087.Daro_2114"/>
<dbReference type="KEGG" id="dar:Daro_2114"/>
<dbReference type="eggNOG" id="COG2170">
    <property type="taxonomic scope" value="Bacteria"/>
</dbReference>
<dbReference type="HOGENOM" id="CLU_044848_1_1_4"/>
<dbReference type="OrthoDB" id="9769628at2"/>
<dbReference type="GO" id="GO:0005524">
    <property type="term" value="F:ATP binding"/>
    <property type="evidence" value="ECO:0007669"/>
    <property type="project" value="UniProtKB-KW"/>
</dbReference>
<dbReference type="GO" id="GO:0004357">
    <property type="term" value="F:glutamate-cysteine ligase activity"/>
    <property type="evidence" value="ECO:0007669"/>
    <property type="project" value="UniProtKB-EC"/>
</dbReference>
<dbReference type="GO" id="GO:0042398">
    <property type="term" value="P:modified amino acid biosynthetic process"/>
    <property type="evidence" value="ECO:0007669"/>
    <property type="project" value="InterPro"/>
</dbReference>
<dbReference type="Gene3D" id="3.30.590.20">
    <property type="match status" value="1"/>
</dbReference>
<dbReference type="HAMAP" id="MF_01609">
    <property type="entry name" value="Glu_cys_ligase_2"/>
    <property type="match status" value="1"/>
</dbReference>
<dbReference type="InterPro" id="IPR050141">
    <property type="entry name" value="GCL_type2/YbdK_subfam"/>
</dbReference>
<dbReference type="InterPro" id="IPR006336">
    <property type="entry name" value="GCS2"/>
</dbReference>
<dbReference type="InterPro" id="IPR014746">
    <property type="entry name" value="Gln_synth/guanido_kin_cat_dom"/>
</dbReference>
<dbReference type="InterPro" id="IPR011793">
    <property type="entry name" value="YbdK"/>
</dbReference>
<dbReference type="NCBIfam" id="TIGR02050">
    <property type="entry name" value="gshA_cyan_rel"/>
    <property type="match status" value="1"/>
</dbReference>
<dbReference type="NCBIfam" id="NF010040">
    <property type="entry name" value="PRK13516.1"/>
    <property type="match status" value="1"/>
</dbReference>
<dbReference type="PANTHER" id="PTHR36510">
    <property type="entry name" value="GLUTAMATE--CYSTEINE LIGASE 2-RELATED"/>
    <property type="match status" value="1"/>
</dbReference>
<dbReference type="PANTHER" id="PTHR36510:SF1">
    <property type="entry name" value="GLUTAMATE--CYSTEINE LIGASE 2-RELATED"/>
    <property type="match status" value="1"/>
</dbReference>
<dbReference type="Pfam" id="PF04107">
    <property type="entry name" value="GCS2"/>
    <property type="match status" value="1"/>
</dbReference>
<dbReference type="SUPFAM" id="SSF55931">
    <property type="entry name" value="Glutamine synthetase/guanido kinase"/>
    <property type="match status" value="1"/>
</dbReference>
<name>GCS2_DECAR</name>
<comment type="function">
    <text evidence="1">ATP-dependent carboxylate-amine ligase which exhibits weak glutamate--cysteine ligase activity.</text>
</comment>
<comment type="catalytic activity">
    <reaction evidence="1">
        <text>L-cysteine + L-glutamate + ATP = gamma-L-glutamyl-L-cysteine + ADP + phosphate + H(+)</text>
        <dbReference type="Rhea" id="RHEA:13285"/>
        <dbReference type="ChEBI" id="CHEBI:15378"/>
        <dbReference type="ChEBI" id="CHEBI:29985"/>
        <dbReference type="ChEBI" id="CHEBI:30616"/>
        <dbReference type="ChEBI" id="CHEBI:35235"/>
        <dbReference type="ChEBI" id="CHEBI:43474"/>
        <dbReference type="ChEBI" id="CHEBI:58173"/>
        <dbReference type="ChEBI" id="CHEBI:456216"/>
        <dbReference type="EC" id="6.3.2.2"/>
    </reaction>
</comment>
<comment type="similarity">
    <text evidence="1">Belongs to the glutamate--cysteine ligase type 2 family. YbdK subfamily.</text>
</comment>
<accession>Q47E74</accession>
<feature type="chain" id="PRO_0000255799" description="Putative glutamate--cysteine ligase 2">
    <location>
        <begin position="1"/>
        <end position="384"/>
    </location>
</feature>
<sequence length="384" mass="42825">MTTKALGDFKDSAAFSLGVELELQLVSKRDFDLTRGATDLLGSLDYDERFGEIKLEITESMIEISTQPQSTVDGIAADLSGLRDTLRQHCERNNIGICGGGTHPFHHWPERRICPGDRFNDLYQRYGYLAKQFTVFGQHVHIGCTSADEAIWLTQAFGVYVPAFIALSASSPFVDGVDSFYQSARLNAVSAFPLSGQCPPLGSWQEFTEHFAFLQACGIAQSIKDLYWDVRPKPEFGTVEIRVCDTPLTIEQATSLAALAQSLARWLLRTRPPLHTAKQAHVARYNKFQACRYGFEAMISDPVNLCQTPLKQTLADLLEAVSEDARELDCADWLSPLKQAVAENTGDAAWLRARENQHGNLNDVVREASKRLMGKNDQFQEKTK</sequence>
<gene>
    <name type="ordered locus">Daro_2114</name>
</gene>
<protein>
    <recommendedName>
        <fullName evidence="1">Putative glutamate--cysteine ligase 2</fullName>
        <ecNumber evidence="1">6.3.2.2</ecNumber>
    </recommendedName>
    <alternativeName>
        <fullName evidence="1">Gamma-glutamylcysteine synthetase 2</fullName>
        <shortName evidence="1">GCS 2</shortName>
        <shortName evidence="1">Gamma-GCS 2</shortName>
    </alternativeName>
</protein>
<evidence type="ECO:0000255" key="1">
    <source>
        <dbReference type="HAMAP-Rule" id="MF_01609"/>
    </source>
</evidence>
<proteinExistence type="inferred from homology"/>